<proteinExistence type="evidence at protein level"/>
<comment type="function">
    <text>May be involved in transcriptional regulation.</text>
</comment>
<comment type="interaction">
    <interactant intactId="EBI-744257">
        <id>Q96IQ9</id>
    </interactant>
    <interactant intactId="EBI-10173507">
        <id>Q6UY14-3</id>
        <label>ADAMTSL4</label>
    </interactant>
    <organismsDiffer>false</organismsDiffer>
    <experiments>3</experiments>
</comment>
<comment type="interaction">
    <interactant intactId="EBI-744257">
        <id>Q96IQ9</id>
    </interactant>
    <interactant intactId="EBI-739580">
        <id>Q13137</id>
        <label>CALCOCO2</label>
    </interactant>
    <organismsDiffer>false</organismsDiffer>
    <experiments>3</experiments>
</comment>
<comment type="interaction">
    <interactant intactId="EBI-744257">
        <id>Q96IQ9</id>
    </interactant>
    <interactant intactId="EBI-3866279">
        <id>Q9BWT7</id>
        <label>CARD10</label>
    </interactant>
    <organismsDiffer>false</organismsDiffer>
    <experiments>3</experiments>
</comment>
<comment type="interaction">
    <interactant intactId="EBI-744257">
        <id>Q96IQ9</id>
    </interactant>
    <interactant intactId="EBI-9038570">
        <id>P27918</id>
        <label>CFP</label>
    </interactant>
    <organismsDiffer>false</organismsDiffer>
    <experiments>3</experiments>
</comment>
<comment type="interaction">
    <interactant intactId="EBI-744257">
        <id>Q96IQ9</id>
    </interactant>
    <interactant intactId="EBI-12819063">
        <id>Q9BYD5</id>
        <label>CNFN</label>
    </interactant>
    <organismsDiffer>false</organismsDiffer>
    <experiments>3</experiments>
</comment>
<comment type="interaction">
    <interactant intactId="EBI-744257">
        <id>Q96IQ9</id>
    </interactant>
    <interactant intactId="EBI-3867333">
        <id>A8MQ03</id>
        <label>CYSRT1</label>
    </interactant>
    <organismsDiffer>false</organismsDiffer>
    <experiments>3</experiments>
</comment>
<comment type="interaction">
    <interactant intactId="EBI-744257">
        <id>Q96IQ9</id>
    </interactant>
    <interactant intactId="EBI-947973">
        <id>P98095</id>
        <label>FBLN2</label>
    </interactant>
    <organismsDiffer>false</organismsDiffer>
    <experiments>3</experiments>
</comment>
<comment type="interaction">
    <interactant intactId="EBI-744257">
        <id>Q96IQ9</id>
    </interactant>
    <interactant intactId="EBI-618309">
        <id>Q08379</id>
        <label>GOLGA2</label>
    </interactant>
    <organismsDiffer>false</organismsDiffer>
    <experiments>7</experiments>
</comment>
<comment type="interaction">
    <interactant intactId="EBI-744257">
        <id>Q96IQ9</id>
    </interactant>
    <interactant intactId="EBI-5916454">
        <id>A6NEM1</id>
        <label>GOLGA6L9</label>
    </interactant>
    <organismsDiffer>false</organismsDiffer>
    <experiments>3</experiments>
</comment>
<comment type="interaction">
    <interactant intactId="EBI-744257">
        <id>Q96IQ9</id>
    </interactant>
    <interactant intactId="EBI-748420">
        <id>Q9NSC5</id>
        <label>HOMER3</label>
    </interactant>
    <organismsDiffer>false</organismsDiffer>
    <experiments>3</experiments>
</comment>
<comment type="interaction">
    <interactant intactId="EBI-744257">
        <id>Q96IQ9</id>
    </interactant>
    <interactant intactId="EBI-11028396">
        <id>Q6UXX5</id>
        <label>ITIH6</label>
    </interactant>
    <organismsDiffer>false</organismsDiffer>
    <experiments>3</experiments>
</comment>
<comment type="interaction">
    <interactant intactId="EBI-744257">
        <id>Q96IQ9</id>
    </interactant>
    <interactant intactId="EBI-2556193">
        <id>Q63ZY3</id>
        <label>KANK2</label>
    </interactant>
    <organismsDiffer>false</organismsDiffer>
    <experiments>3</experiments>
</comment>
<comment type="interaction">
    <interactant intactId="EBI-744257">
        <id>Q96IQ9</id>
    </interactant>
    <interactant intactId="EBI-948001">
        <id>Q15323</id>
        <label>KRT31</label>
    </interactant>
    <organismsDiffer>false</organismsDiffer>
    <experiments>3</experiments>
</comment>
<comment type="interaction">
    <interactant intactId="EBI-744257">
        <id>Q96IQ9</id>
    </interactant>
    <interactant intactId="EBI-1047093">
        <id>O76011</id>
        <label>KRT34</label>
    </interactant>
    <organismsDiffer>false</organismsDiffer>
    <experiments>3</experiments>
</comment>
<comment type="interaction">
    <interactant intactId="EBI-744257">
        <id>Q96IQ9</id>
    </interactant>
    <interactant intactId="EBI-11958506">
        <id>O76013-2</id>
        <label>KRT36</label>
    </interactant>
    <organismsDiffer>false</organismsDiffer>
    <experiments>3</experiments>
</comment>
<comment type="interaction">
    <interactant intactId="EBI-744257">
        <id>Q96IQ9</id>
    </interactant>
    <interactant intactId="EBI-9996498">
        <id>O43790</id>
        <label>KRT86</label>
    </interactant>
    <organismsDiffer>false</organismsDiffer>
    <experiments>3</experiments>
</comment>
<comment type="interaction">
    <interactant intactId="EBI-744257">
        <id>Q96IQ9</id>
    </interactant>
    <interactant intactId="EBI-11749135">
        <id>Q8IUG1</id>
        <label>KRTAP1-3</label>
    </interactant>
    <organismsDiffer>false</organismsDiffer>
    <experiments>3</experiments>
</comment>
<comment type="interaction">
    <interactant intactId="EBI-744257">
        <id>Q96IQ9</id>
    </interactant>
    <interactant intactId="EBI-10172290">
        <id>P60409</id>
        <label>KRTAP10-7</label>
    </interactant>
    <organismsDiffer>false</organismsDiffer>
    <experiments>3</experiments>
</comment>
<comment type="interaction">
    <interactant intactId="EBI-744257">
        <id>Q96IQ9</id>
    </interactant>
    <interactant intactId="EBI-10171774">
        <id>P60410</id>
        <label>KRTAP10-8</label>
    </interactant>
    <organismsDiffer>false</organismsDiffer>
    <experiments>3</experiments>
</comment>
<comment type="interaction">
    <interactant intactId="EBI-744257">
        <id>Q96IQ9</id>
    </interactant>
    <interactant intactId="EBI-10241252">
        <id>Q3SY46</id>
        <label>KRTAP13-3</label>
    </interactant>
    <organismsDiffer>false</organismsDiffer>
    <experiments>3</experiments>
</comment>
<comment type="interaction">
    <interactant intactId="EBI-744257">
        <id>Q96IQ9</id>
    </interactant>
    <interactant intactId="EBI-12811111">
        <id>Q8IUB9</id>
        <label>KRTAP19-1</label>
    </interactant>
    <organismsDiffer>false</organismsDiffer>
    <experiments>3</experiments>
</comment>
<comment type="interaction">
    <interactant intactId="EBI-744257">
        <id>Q96IQ9</id>
    </interactant>
    <interactant intactId="EBI-1048945">
        <id>Q3LI72</id>
        <label>KRTAP19-5</label>
    </interactant>
    <organismsDiffer>false</organismsDiffer>
    <experiments>5</experiments>
</comment>
<comment type="interaction">
    <interactant intactId="EBI-744257">
        <id>Q96IQ9</id>
    </interactant>
    <interactant intactId="EBI-12805508">
        <id>Q3LI70</id>
        <label>KRTAP19-6</label>
    </interactant>
    <organismsDiffer>false</organismsDiffer>
    <experiments>3</experiments>
</comment>
<comment type="interaction">
    <interactant intactId="EBI-744257">
        <id>Q96IQ9</id>
    </interactant>
    <interactant intactId="EBI-9996449">
        <id>Q9BYR8</id>
        <label>KRTAP3-1</label>
    </interactant>
    <organismsDiffer>false</organismsDiffer>
    <experiments>3</experiments>
</comment>
<comment type="interaction">
    <interactant intactId="EBI-744257">
        <id>Q96IQ9</id>
    </interactant>
    <interactant intactId="EBI-739863">
        <id>Q9BQ66</id>
        <label>KRTAP4-12</label>
    </interactant>
    <organismsDiffer>false</organismsDiffer>
    <experiments>3</experiments>
</comment>
<comment type="interaction">
    <interactant intactId="EBI-744257">
        <id>Q96IQ9</id>
    </interactant>
    <interactant intactId="EBI-3958099">
        <id>P26371</id>
        <label>KRTAP5-9</label>
    </interactant>
    <organismsDiffer>false</organismsDiffer>
    <experiments>3</experiments>
</comment>
<comment type="interaction">
    <interactant intactId="EBI-744257">
        <id>Q96IQ9</id>
    </interactant>
    <interactant intactId="EBI-12111050">
        <id>Q3LI64</id>
        <label>KRTAP6-1</label>
    </interactant>
    <organismsDiffer>false</organismsDiffer>
    <experiments>5</experiments>
</comment>
<comment type="interaction">
    <interactant intactId="EBI-744257">
        <id>Q96IQ9</id>
    </interactant>
    <interactant intactId="EBI-11962084">
        <id>Q3LI66</id>
        <label>KRTAP6-2</label>
    </interactant>
    <organismsDiffer>false</organismsDiffer>
    <experiments>5</experiments>
</comment>
<comment type="interaction">
    <interactant intactId="EBI-744257">
        <id>Q96IQ9</id>
    </interactant>
    <interactant intactId="EBI-22311199">
        <id>Q3LI67</id>
        <label>KRTAP6-3</label>
    </interactant>
    <organismsDiffer>false</organismsDiffer>
    <experiments>3</experiments>
</comment>
<comment type="interaction">
    <interactant intactId="EBI-744257">
        <id>Q96IQ9</id>
    </interactant>
    <interactant intactId="EBI-1043191">
        <id>Q9BYQ3</id>
        <label>KRTAP9-3</label>
    </interactant>
    <organismsDiffer>false</organismsDiffer>
    <experiments>3</experiments>
</comment>
<comment type="interaction">
    <interactant intactId="EBI-744257">
        <id>Q96IQ9</id>
    </interactant>
    <interactant intactId="EBI-724076">
        <id>Q99750</id>
        <label>MDFI</label>
    </interactant>
    <organismsDiffer>false</organismsDiffer>
    <experiments>3</experiments>
</comment>
<comment type="interaction">
    <interactant intactId="EBI-744257">
        <id>Q96IQ9</id>
    </interactant>
    <interactant intactId="EBI-2340269">
        <id>Q13064</id>
        <label>MKRN3</label>
    </interactant>
    <organismsDiffer>false</organismsDiffer>
    <experiments>3</experiments>
</comment>
<comment type="interaction">
    <interactant intactId="EBI-744257">
        <id>Q96IQ9</id>
    </interactant>
    <interactant intactId="EBI-11522433">
        <id>Q5JR59-3</id>
        <label>MTUS2</label>
    </interactant>
    <organismsDiffer>false</organismsDiffer>
    <experiments>3</experiments>
</comment>
<comment type="interaction">
    <interactant intactId="EBI-744257">
        <id>Q96IQ9</id>
    </interactant>
    <interactant intactId="EBI-22310682">
        <id>P0DPK4</id>
        <label>NOTCH2NLC</label>
    </interactant>
    <organismsDiffer>false</organismsDiffer>
    <experiments>3</experiments>
</comment>
<comment type="interaction">
    <interactant intactId="EBI-744257">
        <id>Q96IQ9</id>
    </interactant>
    <interactant intactId="EBI-9640281">
        <id>Q5VU43-2</id>
        <label>PDE4DIP</label>
    </interactant>
    <organismsDiffer>false</organismsDiffer>
    <experiments>3</experiments>
</comment>
<comment type="interaction">
    <interactant intactId="EBI-744257">
        <id>Q96IQ9</id>
    </interactant>
    <interactant intactId="EBI-79165">
        <id>Q9NRD5</id>
        <label>PICK1</label>
    </interactant>
    <organismsDiffer>false</organismsDiffer>
    <experiments>3</experiments>
</comment>
<comment type="interaction">
    <interactant intactId="EBI-744257">
        <id>Q96IQ9</id>
    </interactant>
    <interactant intactId="EBI-943588">
        <id>Q16633</id>
        <label>POU2AF1</label>
    </interactant>
    <organismsDiffer>false</organismsDiffer>
    <experiments>3</experiments>
</comment>
<comment type="interaction">
    <interactant intactId="EBI-744257">
        <id>Q96IQ9</id>
    </interactant>
    <interactant intactId="EBI-710402">
        <id>Q96I34</id>
        <label>PPP1R16A</label>
    </interactant>
    <organismsDiffer>false</organismsDiffer>
    <experiments>3</experiments>
</comment>
<comment type="interaction">
    <interactant intactId="EBI-744257">
        <id>Q96IQ9</id>
    </interactant>
    <interactant intactId="EBI-2340624">
        <id>Q9BYM8</id>
        <label>RBCK1</label>
    </interactant>
    <organismsDiffer>false</organismsDiffer>
    <experiments>3</experiments>
</comment>
<comment type="interaction">
    <interactant intactId="EBI-744257">
        <id>Q96IQ9</id>
    </interactant>
    <interactant intactId="EBI-741332">
        <id>P57052</id>
        <label>RBM11</label>
    </interactant>
    <organismsDiffer>false</organismsDiffer>
    <experiments>3</experiments>
</comment>
<comment type="interaction">
    <interactant intactId="EBI-744257">
        <id>Q96IQ9</id>
    </interactant>
    <interactant intactId="EBI-19952306">
        <id>O14492-2</id>
        <label>SH2B2</label>
    </interactant>
    <organismsDiffer>false</organismsDiffer>
    <experiments>3</experiments>
</comment>
<comment type="interaction">
    <interactant intactId="EBI-744257">
        <id>Q96IQ9</id>
    </interactant>
    <interactant intactId="EBI-741237">
        <id>O60504</id>
        <label>SORBS3</label>
    </interactant>
    <organismsDiffer>false</organismsDiffer>
    <experiments>3</experiments>
</comment>
<comment type="interaction">
    <interactant intactId="EBI-744257">
        <id>Q96IQ9</id>
    </interactant>
    <interactant intactId="EBI-5235340">
        <id>Q7Z699</id>
        <label>SPRED1</label>
    </interactant>
    <organismsDiffer>false</organismsDiffer>
    <experiments>3</experiments>
</comment>
<comment type="interaction">
    <interactant intactId="EBI-744257">
        <id>Q96IQ9</id>
    </interactant>
    <interactant intactId="EBI-7082156">
        <id>Q7Z698</id>
        <label>SPRED2</label>
    </interactant>
    <organismsDiffer>false</organismsDiffer>
    <experiments>3</experiments>
</comment>
<comment type="interaction">
    <interactant intactId="EBI-744257">
        <id>Q96IQ9</id>
    </interactant>
    <interactant intactId="EBI-750109">
        <id>Q9NYB0</id>
        <label>TERF2IP</label>
    </interactant>
    <organismsDiffer>false</organismsDiffer>
    <experiments>2</experiments>
</comment>
<comment type="interaction">
    <interactant intactId="EBI-744257">
        <id>Q96IQ9</id>
    </interactant>
    <interactant intactId="EBI-11523345">
        <id>Q8IYF3-3</id>
        <label>TEX11</label>
    </interactant>
    <organismsDiffer>false</organismsDiffer>
    <experiments>3</experiments>
</comment>
<comment type="interaction">
    <interactant intactId="EBI-744257">
        <id>Q96IQ9</id>
    </interactant>
    <interactant intactId="EBI-11741437">
        <id>Q08117-2</id>
        <label>TLE5</label>
    </interactant>
    <organismsDiffer>false</organismsDiffer>
    <experiments>5</experiments>
</comment>
<comment type="interaction">
    <interactant intactId="EBI-744257">
        <id>Q96IQ9</id>
    </interactant>
    <interactant intactId="EBI-11981577">
        <id>Q9UDY6-2</id>
        <label>TRIM10</label>
    </interactant>
    <organismsDiffer>false</organismsDiffer>
    <experiments>3</experiments>
</comment>
<comment type="interaction">
    <interactant intactId="EBI-744257">
        <id>Q96IQ9</id>
    </interactant>
    <interactant intactId="EBI-719493">
        <id>P14373</id>
        <label>TRIM27</label>
    </interactant>
    <organismsDiffer>false</organismsDiffer>
    <experiments>3</experiments>
</comment>
<comment type="interaction">
    <interactant intactId="EBI-744257">
        <id>Q96IQ9</id>
    </interactant>
    <interactant intactId="EBI-5235829">
        <id>Q8IWZ5</id>
        <label>TRIM42</label>
    </interactant>
    <organismsDiffer>false</organismsDiffer>
    <experiments>3</experiments>
</comment>
<comment type="interaction">
    <interactant intactId="EBI-744257">
        <id>Q96IQ9</id>
    </interactant>
    <interactant intactId="EBI-12040603">
        <id>Q9NZC7-5</id>
        <label>WWOX</label>
    </interactant>
    <organismsDiffer>false</organismsDiffer>
    <experiments>3</experiments>
</comment>
<comment type="interaction">
    <interactant intactId="EBI-744257">
        <id>Q96IQ9</id>
    </interactant>
    <interactant intactId="EBI-12030590">
        <id>Q9H0C1</id>
        <label>ZMYND12</label>
    </interactant>
    <organismsDiffer>false</organismsDiffer>
    <experiments>3</experiments>
</comment>
<comment type="subcellular location">
    <subcellularLocation>
        <location evidence="6">Nucleus</location>
    </subcellularLocation>
</comment>
<comment type="alternative products">
    <event type="alternative splicing"/>
    <isoform>
        <id>Q96IQ9-1</id>
        <name>1</name>
        <sequence type="displayed"/>
    </isoform>
    <isoform>
        <id>Q96IQ9-2</id>
        <name>2</name>
        <sequence type="described" ref="VSP_045351"/>
    </isoform>
</comment>
<comment type="similarity">
    <text evidence="6">Belongs to the krueppel C2H2-type zinc-finger protein family.</text>
</comment>
<protein>
    <recommendedName>
        <fullName>Zinc finger protein 414</fullName>
    </recommendedName>
</protein>
<name>ZN414_HUMAN</name>
<dbReference type="EMBL" id="AK074191">
    <property type="status" value="NOT_ANNOTATED_CDS"/>
    <property type="molecule type" value="mRNA"/>
</dbReference>
<dbReference type="EMBL" id="AC092298">
    <property type="status" value="NOT_ANNOTATED_CDS"/>
    <property type="molecule type" value="Genomic_DNA"/>
</dbReference>
<dbReference type="EMBL" id="CH471139">
    <property type="protein sequence ID" value="EAW68915.1"/>
    <property type="molecule type" value="Genomic_DNA"/>
</dbReference>
<dbReference type="EMBL" id="BC007310">
    <property type="protein sequence ID" value="AAH07310.1"/>
    <property type="molecule type" value="mRNA"/>
</dbReference>
<dbReference type="EMBL" id="BC071937">
    <property type="protein sequence ID" value="AAH71937.1"/>
    <property type="molecule type" value="mRNA"/>
</dbReference>
<dbReference type="CCDS" id="CCDS12205.1">
    <molecule id="Q96IQ9-1"/>
</dbReference>
<dbReference type="CCDS" id="CCDS54211.1">
    <molecule id="Q96IQ9-2"/>
</dbReference>
<dbReference type="RefSeq" id="NP_001139647.1">
    <molecule id="Q96IQ9-2"/>
    <property type="nucleotide sequence ID" value="NM_001146175.2"/>
</dbReference>
<dbReference type="RefSeq" id="NP_115746.2">
    <molecule id="Q96IQ9-1"/>
    <property type="nucleotide sequence ID" value="NM_032370.3"/>
</dbReference>
<dbReference type="BioGRID" id="124054">
    <property type="interactions" value="122"/>
</dbReference>
<dbReference type="FunCoup" id="Q96IQ9">
    <property type="interactions" value="471"/>
</dbReference>
<dbReference type="IntAct" id="Q96IQ9">
    <property type="interactions" value="109"/>
</dbReference>
<dbReference type="STRING" id="9606.ENSP00000377504"/>
<dbReference type="GlyGen" id="Q96IQ9">
    <property type="glycosylation" value="2 sites, 1 O-linked glycan (1 site)"/>
</dbReference>
<dbReference type="iPTMnet" id="Q96IQ9"/>
<dbReference type="PhosphoSitePlus" id="Q96IQ9"/>
<dbReference type="BioMuta" id="ZNF414"/>
<dbReference type="DMDM" id="125987870"/>
<dbReference type="jPOST" id="Q96IQ9"/>
<dbReference type="MassIVE" id="Q96IQ9"/>
<dbReference type="PaxDb" id="9606-ENSP00000377504"/>
<dbReference type="PeptideAtlas" id="Q96IQ9"/>
<dbReference type="ProteomicsDB" id="2385"/>
<dbReference type="ProteomicsDB" id="76845">
    <molecule id="Q96IQ9-1"/>
</dbReference>
<dbReference type="Antibodypedia" id="24915">
    <property type="antibodies" value="45 antibodies from 15 providers"/>
</dbReference>
<dbReference type="DNASU" id="84330"/>
<dbReference type="Ensembl" id="ENST00000255616.8">
    <molecule id="Q96IQ9-1"/>
    <property type="protein sequence ID" value="ENSP00000255616.7"/>
    <property type="gene ID" value="ENSG00000133250.14"/>
</dbReference>
<dbReference type="Ensembl" id="ENST00000393927.9">
    <molecule id="Q96IQ9-2"/>
    <property type="protein sequence ID" value="ENSP00000377504.3"/>
    <property type="gene ID" value="ENSG00000133250.14"/>
</dbReference>
<dbReference type="GeneID" id="84330"/>
<dbReference type="KEGG" id="hsa:84330"/>
<dbReference type="MANE-Select" id="ENST00000393927.9">
    <molecule id="Q96IQ9-2"/>
    <property type="protein sequence ID" value="ENSP00000377504.3"/>
    <property type="RefSeq nucleotide sequence ID" value="NM_001146175.2"/>
    <property type="RefSeq protein sequence ID" value="NP_001139647.1"/>
</dbReference>
<dbReference type="UCSC" id="uc002mke.5">
    <molecule id="Q96IQ9-1"/>
    <property type="organism name" value="human"/>
</dbReference>
<dbReference type="AGR" id="HGNC:20630"/>
<dbReference type="CTD" id="84330"/>
<dbReference type="GeneCards" id="ZNF414"/>
<dbReference type="HGNC" id="HGNC:20630">
    <property type="gene designation" value="ZNF414"/>
</dbReference>
<dbReference type="HPA" id="ENSG00000133250">
    <property type="expression patterns" value="Low tissue specificity"/>
</dbReference>
<dbReference type="MIM" id="620980">
    <property type="type" value="gene"/>
</dbReference>
<dbReference type="neXtProt" id="NX_Q96IQ9"/>
<dbReference type="OpenTargets" id="ENSG00000133250"/>
<dbReference type="PharmGKB" id="PA142670521"/>
<dbReference type="VEuPathDB" id="HostDB:ENSG00000133250"/>
<dbReference type="eggNOG" id="KOG1721">
    <property type="taxonomic scope" value="Eukaryota"/>
</dbReference>
<dbReference type="GeneTree" id="ENSGT00390000006876"/>
<dbReference type="HOGENOM" id="CLU_049178_0_0_1"/>
<dbReference type="InParanoid" id="Q96IQ9"/>
<dbReference type="OMA" id="HIRDHEI"/>
<dbReference type="OrthoDB" id="8730587at2759"/>
<dbReference type="PAN-GO" id="Q96IQ9">
    <property type="GO annotations" value="0 GO annotations based on evolutionary models"/>
</dbReference>
<dbReference type="PhylomeDB" id="Q96IQ9"/>
<dbReference type="TreeFam" id="TF337512"/>
<dbReference type="PathwayCommons" id="Q96IQ9"/>
<dbReference type="SignaLink" id="Q96IQ9"/>
<dbReference type="BioGRID-ORCS" id="84330">
    <property type="hits" value="14 hits in 1181 CRISPR screens"/>
</dbReference>
<dbReference type="ChiTaRS" id="ZNF414">
    <property type="organism name" value="human"/>
</dbReference>
<dbReference type="GenomeRNAi" id="84330"/>
<dbReference type="Pharos" id="Q96IQ9">
    <property type="development level" value="Tdark"/>
</dbReference>
<dbReference type="PRO" id="PR:Q96IQ9"/>
<dbReference type="Proteomes" id="UP000005640">
    <property type="component" value="Chromosome 19"/>
</dbReference>
<dbReference type="RNAct" id="Q96IQ9">
    <property type="molecule type" value="protein"/>
</dbReference>
<dbReference type="Bgee" id="ENSG00000133250">
    <property type="expression patterns" value="Expressed in granulocyte and 92 other cell types or tissues"/>
</dbReference>
<dbReference type="ExpressionAtlas" id="Q96IQ9">
    <property type="expression patterns" value="baseline and differential"/>
</dbReference>
<dbReference type="GO" id="GO:0005634">
    <property type="term" value="C:nucleus"/>
    <property type="evidence" value="ECO:0007669"/>
    <property type="project" value="UniProtKB-SubCell"/>
</dbReference>
<dbReference type="GO" id="GO:0003677">
    <property type="term" value="F:DNA binding"/>
    <property type="evidence" value="ECO:0007669"/>
    <property type="project" value="UniProtKB-KW"/>
</dbReference>
<dbReference type="GO" id="GO:0003700">
    <property type="term" value="F:DNA-binding transcription factor activity"/>
    <property type="evidence" value="ECO:0000303"/>
    <property type="project" value="ARUK-UCL"/>
</dbReference>
<dbReference type="GO" id="GO:0008270">
    <property type="term" value="F:zinc ion binding"/>
    <property type="evidence" value="ECO:0007669"/>
    <property type="project" value="UniProtKB-KW"/>
</dbReference>
<dbReference type="Gene3D" id="3.30.160.60">
    <property type="entry name" value="Classic Zinc Finger"/>
    <property type="match status" value="1"/>
</dbReference>
<dbReference type="InterPro" id="IPR039882">
    <property type="entry name" value="ZN414"/>
</dbReference>
<dbReference type="InterPro" id="IPR031799">
    <property type="entry name" value="Znf-C2H2_ribbon"/>
</dbReference>
<dbReference type="InterPro" id="IPR013087">
    <property type="entry name" value="Znf_C2H2_type"/>
</dbReference>
<dbReference type="PANTHER" id="PTHR21695">
    <property type="entry name" value="ZINC FINGER PROTEIN 414"/>
    <property type="match status" value="1"/>
</dbReference>
<dbReference type="PANTHER" id="PTHR21695:SF0">
    <property type="entry name" value="ZINC FINGER PROTEIN 414"/>
    <property type="match status" value="1"/>
</dbReference>
<dbReference type="Pfam" id="PF15909">
    <property type="entry name" value="zf-C2H2_8"/>
    <property type="match status" value="1"/>
</dbReference>
<dbReference type="SMART" id="SM00355">
    <property type="entry name" value="ZnF_C2H2"/>
    <property type="match status" value="3"/>
</dbReference>
<dbReference type="PROSITE" id="PS00028">
    <property type="entry name" value="ZINC_FINGER_C2H2_1"/>
    <property type="match status" value="2"/>
</dbReference>
<dbReference type="PROSITE" id="PS50157">
    <property type="entry name" value="ZINC_FINGER_C2H2_2"/>
    <property type="match status" value="1"/>
</dbReference>
<keyword id="KW-0025">Alternative splicing</keyword>
<keyword id="KW-0238">DNA-binding</keyword>
<keyword id="KW-0479">Metal-binding</keyword>
<keyword id="KW-0539">Nucleus</keyword>
<keyword id="KW-1267">Proteomics identification</keyword>
<keyword id="KW-1185">Reference proteome</keyword>
<keyword id="KW-0677">Repeat</keyword>
<keyword id="KW-0804">Transcription</keyword>
<keyword id="KW-0805">Transcription regulation</keyword>
<keyword id="KW-0862">Zinc</keyword>
<keyword id="KW-0863">Zinc-finger</keyword>
<sequence length="312" mass="32782">MEEKPSGPIPDMLATAEPSSSETDKEVLSPAVPAAAPSSSMSEEPGPEQAATPPVWERGGAGGMQQGSSPAPDSCQPGPGPSPGLTSIVSGTSEDLRPPRRRPPPGKQIPCSSPGCCLSFPSVRDLAQHLRTHCPPTQSLEGKLFRCSALSCTETFPSMQELVAHSKLHYKPNRYFKCENCLLRFRTHRSLFKHLHVCAEHAQSPAPPPPPALDREPPAPERPPEVDPASAPGLPFPLLEPFTTPAPAPTGPFLPYLNPAPFGLSPPRLRPFLAAAPGPPASSAAVWKKSQGAGSSPRRPQGGSDAPSGACR</sequence>
<accession>Q96IQ9</accession>
<accession>A8MY94</accession>
<feature type="chain" id="PRO_0000242163" description="Zinc finger protein 414">
    <location>
        <begin position="1"/>
        <end position="312"/>
    </location>
</feature>
<feature type="zinc finger region" description="C2H2-type 1" evidence="1">
    <location>
        <begin position="109"/>
        <end position="133"/>
    </location>
</feature>
<feature type="zinc finger region" description="C2H2-type 2" evidence="1">
    <location>
        <begin position="145"/>
        <end position="169"/>
    </location>
</feature>
<feature type="zinc finger region" description="C2H2-type 3" evidence="1">
    <location>
        <begin position="176"/>
        <end position="201"/>
    </location>
</feature>
<feature type="region of interest" description="Disordered" evidence="2">
    <location>
        <begin position="1"/>
        <end position="110"/>
    </location>
</feature>
<feature type="region of interest" description="Disordered" evidence="2">
    <location>
        <begin position="203"/>
        <end position="312"/>
    </location>
</feature>
<feature type="compositionally biased region" description="Low complexity" evidence="2">
    <location>
        <begin position="29"/>
        <end position="48"/>
    </location>
</feature>
<feature type="compositionally biased region" description="Polar residues" evidence="2">
    <location>
        <begin position="84"/>
        <end position="93"/>
    </location>
</feature>
<feature type="compositionally biased region" description="Basic and acidic residues" evidence="2">
    <location>
        <begin position="213"/>
        <end position="225"/>
    </location>
</feature>
<feature type="compositionally biased region" description="Low complexity" evidence="2">
    <location>
        <begin position="227"/>
        <end position="243"/>
    </location>
</feature>
<feature type="compositionally biased region" description="Low complexity" evidence="2">
    <location>
        <begin position="265"/>
        <end position="285"/>
    </location>
</feature>
<feature type="splice variant" id="VSP_045351" description="In isoform 2." evidence="5">
    <original>ACR</original>
    <variation>HAAPSRIVWEHTRGRYSCMQCAFSTASRPAMTLHLEDHRPGAPAAPAAGPPRPDAPADPAPLAPKVSPLLSEGELPVFSQL</variation>
    <location>
        <begin position="310"/>
        <end position="312"/>
    </location>
</feature>
<feature type="sequence variant" id="VAR_026847" description="In dbSNP:rs8100431." evidence="4">
    <original>Q</original>
    <variation>R</variation>
    <location>
        <position position="65"/>
    </location>
</feature>
<feature type="sequence variant" id="VAR_026848" description="In dbSNP:rs1064010." evidence="3">
    <original>P</original>
    <variation>S</variation>
    <location>
        <position position="77"/>
    </location>
</feature>
<feature type="sequence conflict" description="In Ref. 1; AK074191." evidence="6" ref="1">
    <original>A</original>
    <variation>P</variation>
    <location sequence="Q96IQ9-2">
        <position position="357"/>
    </location>
</feature>
<reference key="1">
    <citation type="journal article" date="2004" name="Nat. Genet.">
        <title>Complete sequencing and characterization of 21,243 full-length human cDNAs.</title>
        <authorList>
            <person name="Ota T."/>
            <person name="Suzuki Y."/>
            <person name="Nishikawa T."/>
            <person name="Otsuki T."/>
            <person name="Sugiyama T."/>
            <person name="Irie R."/>
            <person name="Wakamatsu A."/>
            <person name="Hayashi K."/>
            <person name="Sato H."/>
            <person name="Nagai K."/>
            <person name="Kimura K."/>
            <person name="Makita H."/>
            <person name="Sekine M."/>
            <person name="Obayashi M."/>
            <person name="Nishi T."/>
            <person name="Shibahara T."/>
            <person name="Tanaka T."/>
            <person name="Ishii S."/>
            <person name="Yamamoto J."/>
            <person name="Saito K."/>
            <person name="Kawai Y."/>
            <person name="Isono Y."/>
            <person name="Nakamura Y."/>
            <person name="Nagahari K."/>
            <person name="Murakami K."/>
            <person name="Yasuda T."/>
            <person name="Iwayanagi T."/>
            <person name="Wagatsuma M."/>
            <person name="Shiratori A."/>
            <person name="Sudo H."/>
            <person name="Hosoiri T."/>
            <person name="Kaku Y."/>
            <person name="Kodaira H."/>
            <person name="Kondo H."/>
            <person name="Sugawara M."/>
            <person name="Takahashi M."/>
            <person name="Kanda K."/>
            <person name="Yokoi T."/>
            <person name="Furuya T."/>
            <person name="Kikkawa E."/>
            <person name="Omura Y."/>
            <person name="Abe K."/>
            <person name="Kamihara K."/>
            <person name="Katsuta N."/>
            <person name="Sato K."/>
            <person name="Tanikawa M."/>
            <person name="Yamazaki M."/>
            <person name="Ninomiya K."/>
            <person name="Ishibashi T."/>
            <person name="Yamashita H."/>
            <person name="Murakawa K."/>
            <person name="Fujimori K."/>
            <person name="Tanai H."/>
            <person name="Kimata M."/>
            <person name="Watanabe M."/>
            <person name="Hiraoka S."/>
            <person name="Chiba Y."/>
            <person name="Ishida S."/>
            <person name="Ono Y."/>
            <person name="Takiguchi S."/>
            <person name="Watanabe S."/>
            <person name="Yosida M."/>
            <person name="Hotuta T."/>
            <person name="Kusano J."/>
            <person name="Kanehori K."/>
            <person name="Takahashi-Fujii A."/>
            <person name="Hara H."/>
            <person name="Tanase T.-O."/>
            <person name="Nomura Y."/>
            <person name="Togiya S."/>
            <person name="Komai F."/>
            <person name="Hara R."/>
            <person name="Takeuchi K."/>
            <person name="Arita M."/>
            <person name="Imose N."/>
            <person name="Musashino K."/>
            <person name="Yuuki H."/>
            <person name="Oshima A."/>
            <person name="Sasaki N."/>
            <person name="Aotsuka S."/>
            <person name="Yoshikawa Y."/>
            <person name="Matsunawa H."/>
            <person name="Ichihara T."/>
            <person name="Shiohata N."/>
            <person name="Sano S."/>
            <person name="Moriya S."/>
            <person name="Momiyama H."/>
            <person name="Satoh N."/>
            <person name="Takami S."/>
            <person name="Terashima Y."/>
            <person name="Suzuki O."/>
            <person name="Nakagawa S."/>
            <person name="Senoh A."/>
            <person name="Mizoguchi H."/>
            <person name="Goto Y."/>
            <person name="Shimizu F."/>
            <person name="Wakebe H."/>
            <person name="Hishigaki H."/>
            <person name="Watanabe T."/>
            <person name="Sugiyama A."/>
            <person name="Takemoto M."/>
            <person name="Kawakami B."/>
            <person name="Yamazaki M."/>
            <person name="Watanabe K."/>
            <person name="Kumagai A."/>
            <person name="Itakura S."/>
            <person name="Fukuzumi Y."/>
            <person name="Fujimori Y."/>
            <person name="Komiyama M."/>
            <person name="Tashiro H."/>
            <person name="Tanigami A."/>
            <person name="Fujiwara T."/>
            <person name="Ono T."/>
            <person name="Yamada K."/>
            <person name="Fujii Y."/>
            <person name="Ozaki K."/>
            <person name="Hirao M."/>
            <person name="Ohmori Y."/>
            <person name="Kawabata A."/>
            <person name="Hikiji T."/>
            <person name="Kobatake N."/>
            <person name="Inagaki H."/>
            <person name="Ikema Y."/>
            <person name="Okamoto S."/>
            <person name="Okitani R."/>
            <person name="Kawakami T."/>
            <person name="Noguchi S."/>
            <person name="Itoh T."/>
            <person name="Shigeta K."/>
            <person name="Senba T."/>
            <person name="Matsumura K."/>
            <person name="Nakajima Y."/>
            <person name="Mizuno T."/>
            <person name="Morinaga M."/>
            <person name="Sasaki M."/>
            <person name="Togashi T."/>
            <person name="Oyama M."/>
            <person name="Hata H."/>
            <person name="Watanabe M."/>
            <person name="Komatsu T."/>
            <person name="Mizushima-Sugano J."/>
            <person name="Satoh T."/>
            <person name="Shirai Y."/>
            <person name="Takahashi Y."/>
            <person name="Nakagawa K."/>
            <person name="Okumura K."/>
            <person name="Nagase T."/>
            <person name="Nomura N."/>
            <person name="Kikuchi H."/>
            <person name="Masuho Y."/>
            <person name="Yamashita R."/>
            <person name="Nakai K."/>
            <person name="Yada T."/>
            <person name="Nakamura Y."/>
            <person name="Ohara O."/>
            <person name="Isogai T."/>
            <person name="Sugano S."/>
        </authorList>
    </citation>
    <scope>NUCLEOTIDE SEQUENCE [LARGE SCALE MRNA] (ISOFORM 2)</scope>
    <scope>VARIANT SER-77</scope>
    <source>
        <tissue>Adipose tissue</tissue>
    </source>
</reference>
<reference key="2">
    <citation type="journal article" date="2004" name="Nature">
        <title>The DNA sequence and biology of human chromosome 19.</title>
        <authorList>
            <person name="Grimwood J."/>
            <person name="Gordon L.A."/>
            <person name="Olsen A.S."/>
            <person name="Terry A."/>
            <person name="Schmutz J."/>
            <person name="Lamerdin J.E."/>
            <person name="Hellsten U."/>
            <person name="Goodstein D."/>
            <person name="Couronne O."/>
            <person name="Tran-Gyamfi M."/>
            <person name="Aerts A."/>
            <person name="Altherr M."/>
            <person name="Ashworth L."/>
            <person name="Bajorek E."/>
            <person name="Black S."/>
            <person name="Branscomb E."/>
            <person name="Caenepeel S."/>
            <person name="Carrano A.V."/>
            <person name="Caoile C."/>
            <person name="Chan Y.M."/>
            <person name="Christensen M."/>
            <person name="Cleland C.A."/>
            <person name="Copeland A."/>
            <person name="Dalin E."/>
            <person name="Dehal P."/>
            <person name="Denys M."/>
            <person name="Detter J.C."/>
            <person name="Escobar J."/>
            <person name="Flowers D."/>
            <person name="Fotopulos D."/>
            <person name="Garcia C."/>
            <person name="Georgescu A.M."/>
            <person name="Glavina T."/>
            <person name="Gomez M."/>
            <person name="Gonzales E."/>
            <person name="Groza M."/>
            <person name="Hammon N."/>
            <person name="Hawkins T."/>
            <person name="Haydu L."/>
            <person name="Ho I."/>
            <person name="Huang W."/>
            <person name="Israni S."/>
            <person name="Jett J."/>
            <person name="Kadner K."/>
            <person name="Kimball H."/>
            <person name="Kobayashi A."/>
            <person name="Larionov V."/>
            <person name="Leem S.-H."/>
            <person name="Lopez F."/>
            <person name="Lou Y."/>
            <person name="Lowry S."/>
            <person name="Malfatti S."/>
            <person name="Martinez D."/>
            <person name="McCready P.M."/>
            <person name="Medina C."/>
            <person name="Morgan J."/>
            <person name="Nelson K."/>
            <person name="Nolan M."/>
            <person name="Ovcharenko I."/>
            <person name="Pitluck S."/>
            <person name="Pollard M."/>
            <person name="Popkie A.P."/>
            <person name="Predki P."/>
            <person name="Quan G."/>
            <person name="Ramirez L."/>
            <person name="Rash S."/>
            <person name="Retterer J."/>
            <person name="Rodriguez A."/>
            <person name="Rogers S."/>
            <person name="Salamov A."/>
            <person name="Salazar A."/>
            <person name="She X."/>
            <person name="Smith D."/>
            <person name="Slezak T."/>
            <person name="Solovyev V."/>
            <person name="Thayer N."/>
            <person name="Tice H."/>
            <person name="Tsai M."/>
            <person name="Ustaszewska A."/>
            <person name="Vo N."/>
            <person name="Wagner M."/>
            <person name="Wheeler J."/>
            <person name="Wu K."/>
            <person name="Xie G."/>
            <person name="Yang J."/>
            <person name="Dubchak I."/>
            <person name="Furey T.S."/>
            <person name="DeJong P."/>
            <person name="Dickson M."/>
            <person name="Gordon D."/>
            <person name="Eichler E.E."/>
            <person name="Pennacchio L.A."/>
            <person name="Richardson P."/>
            <person name="Stubbs L."/>
            <person name="Rokhsar D.S."/>
            <person name="Myers R.M."/>
            <person name="Rubin E.M."/>
            <person name="Lucas S.M."/>
        </authorList>
    </citation>
    <scope>NUCLEOTIDE SEQUENCE [LARGE SCALE GENOMIC DNA]</scope>
</reference>
<reference key="3">
    <citation type="submission" date="2005-09" db="EMBL/GenBank/DDBJ databases">
        <authorList>
            <person name="Mural R.J."/>
            <person name="Istrail S."/>
            <person name="Sutton G."/>
            <person name="Florea L."/>
            <person name="Halpern A.L."/>
            <person name="Mobarry C.M."/>
            <person name="Lippert R."/>
            <person name="Walenz B."/>
            <person name="Shatkay H."/>
            <person name="Dew I."/>
            <person name="Miller J.R."/>
            <person name="Flanigan M.J."/>
            <person name="Edwards N.J."/>
            <person name="Bolanos R."/>
            <person name="Fasulo D."/>
            <person name="Halldorsson B.V."/>
            <person name="Hannenhalli S."/>
            <person name="Turner R."/>
            <person name="Yooseph S."/>
            <person name="Lu F."/>
            <person name="Nusskern D.R."/>
            <person name="Shue B.C."/>
            <person name="Zheng X.H."/>
            <person name="Zhong F."/>
            <person name="Delcher A.L."/>
            <person name="Huson D.H."/>
            <person name="Kravitz S.A."/>
            <person name="Mouchard L."/>
            <person name="Reinert K."/>
            <person name="Remington K.A."/>
            <person name="Clark A.G."/>
            <person name="Waterman M.S."/>
            <person name="Eichler E.E."/>
            <person name="Adams M.D."/>
            <person name="Hunkapiller M.W."/>
            <person name="Myers E.W."/>
            <person name="Venter J.C."/>
        </authorList>
    </citation>
    <scope>NUCLEOTIDE SEQUENCE [LARGE SCALE GENOMIC DNA]</scope>
</reference>
<reference key="4">
    <citation type="journal article" date="2004" name="Genome Res.">
        <title>The status, quality, and expansion of the NIH full-length cDNA project: the Mammalian Gene Collection (MGC).</title>
        <authorList>
            <consortium name="The MGC Project Team"/>
        </authorList>
    </citation>
    <scope>NUCLEOTIDE SEQUENCE [LARGE SCALE MRNA] (ISOFORM 1)</scope>
    <scope>VARIANT ARG-65</scope>
    <source>
        <tissue>Eye</tissue>
        <tissue>Pancreas</tissue>
    </source>
</reference>
<organism>
    <name type="scientific">Homo sapiens</name>
    <name type="common">Human</name>
    <dbReference type="NCBI Taxonomy" id="9606"/>
    <lineage>
        <taxon>Eukaryota</taxon>
        <taxon>Metazoa</taxon>
        <taxon>Chordata</taxon>
        <taxon>Craniata</taxon>
        <taxon>Vertebrata</taxon>
        <taxon>Euteleostomi</taxon>
        <taxon>Mammalia</taxon>
        <taxon>Eutheria</taxon>
        <taxon>Euarchontoglires</taxon>
        <taxon>Primates</taxon>
        <taxon>Haplorrhini</taxon>
        <taxon>Catarrhini</taxon>
        <taxon>Hominidae</taxon>
        <taxon>Homo</taxon>
    </lineage>
</organism>
<gene>
    <name type="primary">ZNF414</name>
</gene>
<evidence type="ECO:0000255" key="1">
    <source>
        <dbReference type="PROSITE-ProRule" id="PRU00042"/>
    </source>
</evidence>
<evidence type="ECO:0000256" key="2">
    <source>
        <dbReference type="SAM" id="MobiDB-lite"/>
    </source>
</evidence>
<evidence type="ECO:0000269" key="3">
    <source>
    </source>
</evidence>
<evidence type="ECO:0000269" key="4">
    <source>
    </source>
</evidence>
<evidence type="ECO:0000303" key="5">
    <source>
    </source>
</evidence>
<evidence type="ECO:0000305" key="6"/>